<comment type="similarity">
    <text evidence="1">Belongs to the bacterial ribosomal protein bL34 family.</text>
</comment>
<protein>
    <recommendedName>
        <fullName evidence="1">Large ribosomal subunit protein bL34</fullName>
    </recommendedName>
    <alternativeName>
        <fullName evidence="3">50S ribosomal protein L34</fullName>
    </alternativeName>
</protein>
<proteinExistence type="inferred from homology"/>
<evidence type="ECO:0000255" key="1">
    <source>
        <dbReference type="HAMAP-Rule" id="MF_00391"/>
    </source>
</evidence>
<evidence type="ECO:0000256" key="2">
    <source>
        <dbReference type="SAM" id="MobiDB-lite"/>
    </source>
</evidence>
<evidence type="ECO:0000305" key="3"/>
<name>RL34_AMOA5</name>
<sequence>MKRTYQPSQRKRSNKHGFRKRMATADGRAVLARRRAKGRKRLTVSDEPRHKR</sequence>
<gene>
    <name evidence="1" type="primary">rpmH</name>
    <name type="ordered locus">Aasi_1719</name>
</gene>
<feature type="chain" id="PRO_1000196003" description="Large ribosomal subunit protein bL34">
    <location>
        <begin position="1"/>
        <end position="52"/>
    </location>
</feature>
<feature type="region of interest" description="Disordered" evidence="2">
    <location>
        <begin position="1"/>
        <end position="52"/>
    </location>
</feature>
<feature type="compositionally biased region" description="Basic residues" evidence="2">
    <location>
        <begin position="1"/>
        <end position="22"/>
    </location>
</feature>
<feature type="compositionally biased region" description="Basic residues" evidence="2">
    <location>
        <begin position="31"/>
        <end position="42"/>
    </location>
</feature>
<feature type="compositionally biased region" description="Basic and acidic residues" evidence="2">
    <location>
        <begin position="43"/>
        <end position="52"/>
    </location>
</feature>
<reference key="1">
    <citation type="journal article" date="2010" name="J. Bacteriol.">
        <title>The genome of the amoeba symbiont 'Candidatus Amoebophilus asiaticus' reveals common mechanisms for host cell interaction among amoeba-associated bacteria.</title>
        <authorList>
            <person name="Schmitz-Esser S."/>
            <person name="Tischler P."/>
            <person name="Arnold R."/>
            <person name="Montanaro J."/>
            <person name="Wagner M."/>
            <person name="Rattei T."/>
            <person name="Horn M."/>
        </authorList>
    </citation>
    <scope>NUCLEOTIDE SEQUENCE [LARGE SCALE GENOMIC DNA]</scope>
    <source>
        <strain>5a2</strain>
    </source>
</reference>
<dbReference type="EMBL" id="CP001102">
    <property type="protein sequence ID" value="ACP21002.1"/>
    <property type="molecule type" value="Genomic_DNA"/>
</dbReference>
<dbReference type="RefSeq" id="WP_012472974.1">
    <property type="nucleotide sequence ID" value="NC_010830.1"/>
</dbReference>
<dbReference type="SMR" id="C3L3W1"/>
<dbReference type="STRING" id="452471.Aasi_1719"/>
<dbReference type="KEGG" id="aas:Aasi_1719"/>
<dbReference type="eggNOG" id="COG0230">
    <property type="taxonomic scope" value="Bacteria"/>
</dbReference>
<dbReference type="HOGENOM" id="CLU_129938_2_0_10"/>
<dbReference type="Proteomes" id="UP000001227">
    <property type="component" value="Chromosome"/>
</dbReference>
<dbReference type="GO" id="GO:1990904">
    <property type="term" value="C:ribonucleoprotein complex"/>
    <property type="evidence" value="ECO:0007669"/>
    <property type="project" value="UniProtKB-KW"/>
</dbReference>
<dbReference type="GO" id="GO:0005840">
    <property type="term" value="C:ribosome"/>
    <property type="evidence" value="ECO:0007669"/>
    <property type="project" value="UniProtKB-KW"/>
</dbReference>
<dbReference type="GO" id="GO:0003735">
    <property type="term" value="F:structural constituent of ribosome"/>
    <property type="evidence" value="ECO:0007669"/>
    <property type="project" value="InterPro"/>
</dbReference>
<dbReference type="GO" id="GO:0006412">
    <property type="term" value="P:translation"/>
    <property type="evidence" value="ECO:0007669"/>
    <property type="project" value="UniProtKB-UniRule"/>
</dbReference>
<dbReference type="FunFam" id="1.10.287.3980:FF:000001">
    <property type="entry name" value="Mitochondrial ribosomal protein L34"/>
    <property type="match status" value="1"/>
</dbReference>
<dbReference type="Gene3D" id="1.10.287.3980">
    <property type="match status" value="1"/>
</dbReference>
<dbReference type="HAMAP" id="MF_00391">
    <property type="entry name" value="Ribosomal_bL34"/>
    <property type="match status" value="1"/>
</dbReference>
<dbReference type="InterPro" id="IPR000271">
    <property type="entry name" value="Ribosomal_bL34"/>
</dbReference>
<dbReference type="InterPro" id="IPR020939">
    <property type="entry name" value="Ribosomal_bL34_CS"/>
</dbReference>
<dbReference type="NCBIfam" id="TIGR01030">
    <property type="entry name" value="rpmH_bact"/>
    <property type="match status" value="1"/>
</dbReference>
<dbReference type="PANTHER" id="PTHR14503:SF4">
    <property type="entry name" value="LARGE RIBOSOMAL SUBUNIT PROTEIN BL34M"/>
    <property type="match status" value="1"/>
</dbReference>
<dbReference type="PANTHER" id="PTHR14503">
    <property type="entry name" value="MITOCHONDRIAL RIBOSOMAL PROTEIN 34 FAMILY MEMBER"/>
    <property type="match status" value="1"/>
</dbReference>
<dbReference type="Pfam" id="PF00468">
    <property type="entry name" value="Ribosomal_L34"/>
    <property type="match status" value="1"/>
</dbReference>
<dbReference type="PROSITE" id="PS00784">
    <property type="entry name" value="RIBOSOMAL_L34"/>
    <property type="match status" value="1"/>
</dbReference>
<accession>C3L3W1</accession>
<keyword id="KW-1185">Reference proteome</keyword>
<keyword id="KW-0687">Ribonucleoprotein</keyword>
<keyword id="KW-0689">Ribosomal protein</keyword>
<organism>
    <name type="scientific">Amoebophilus asiaticus (strain 5a2)</name>
    <dbReference type="NCBI Taxonomy" id="452471"/>
    <lineage>
        <taxon>Bacteria</taxon>
        <taxon>Pseudomonadati</taxon>
        <taxon>Bacteroidota</taxon>
        <taxon>Cytophagia</taxon>
        <taxon>Cytophagales</taxon>
        <taxon>Amoebophilaceae</taxon>
        <taxon>Candidatus Amoebophilus</taxon>
    </lineage>
</organism>